<name>CATA2_HORVU</name>
<protein>
    <recommendedName>
        <fullName>Catalase isozyme 2</fullName>
        <ecNumber>1.11.1.6</ecNumber>
    </recommendedName>
</protein>
<organism>
    <name type="scientific">Hordeum vulgare</name>
    <name type="common">Barley</name>
    <dbReference type="NCBI Taxonomy" id="4513"/>
    <lineage>
        <taxon>Eukaryota</taxon>
        <taxon>Viridiplantae</taxon>
        <taxon>Streptophyta</taxon>
        <taxon>Embryophyta</taxon>
        <taxon>Tracheophyta</taxon>
        <taxon>Spermatophyta</taxon>
        <taxon>Magnoliopsida</taxon>
        <taxon>Liliopsida</taxon>
        <taxon>Poales</taxon>
        <taxon>Poaceae</taxon>
        <taxon>BOP clade</taxon>
        <taxon>Pooideae</taxon>
        <taxon>Triticodae</taxon>
        <taxon>Triticeae</taxon>
        <taxon>Hordeinae</taxon>
        <taxon>Hordeum</taxon>
    </lineage>
</organism>
<keyword id="KW-0330">Glyoxysome</keyword>
<keyword id="KW-0349">Heme</keyword>
<keyword id="KW-0376">Hydrogen peroxide</keyword>
<keyword id="KW-0408">Iron</keyword>
<keyword id="KW-0479">Metal-binding</keyword>
<keyword id="KW-0560">Oxidoreductase</keyword>
<keyword id="KW-0575">Peroxidase</keyword>
<keyword id="KW-0576">Peroxisome</keyword>
<sequence length="494" mass="56913">MDPCKFRPSSSFDTKTTTTNAGQPVWNDNEALTVGPRGPILLEDYHLLEKIAHFARERIPERVVHARGASAKGFFECTHDVTGLTCADFLRAPGARTPVIVRFSTVIHERGSPETIRDPRGFAVKFYTREGNWDLLGNNFPVFFIRDGIKFPDVIHAFKPNPKSHVQEYWRVFDFLSHHPESLHTFFFLFDDVGIPTDYRHMDGFGVNTYTFVSRAGKSHYVKFHWRPTCGVSCLMDDEATLVGGKNHSHATQDLYDSIDAGNFPEWKLFVQVIDPDEEDRFDFDPLDDTKTWPEDLVPLQPVGRLVLDRNVDNFFNENEQLAFGPGLVVPGIYYSDDKMLQCRVFAYADTQRYRLGPNYLMLPVNAPKCGFKNNHYDGAMNFMHRDEEVDYYPSRHAPLRHAEPASFPVPTRPVVGKREKTRIKKENDFVQPGERYRSWAPDRQDRFVRRFSDALAHPKVSHELRVIWIDFLSKCDKSCGMKVANRLNVKPSM</sequence>
<reference key="1">
    <citation type="journal article" date="1995" name="Plant Mol. Biol.">
        <title>Molecular cloning, characterization and expression analysis of two catalase isozyme genes in barley.</title>
        <authorList>
            <person name="Skadsen R.W."/>
            <person name="Schulze-Lefert P."/>
            <person name="Herbst J.M."/>
        </authorList>
    </citation>
    <scope>NUCLEOTIDE SEQUENCE [MRNA]</scope>
    <source>
        <strain>cv. Morex</strain>
    </source>
</reference>
<dbReference type="EC" id="1.11.1.6"/>
<dbReference type="EMBL" id="U20778">
    <property type="protein sequence ID" value="AAA96948.1"/>
    <property type="molecule type" value="mRNA"/>
</dbReference>
<dbReference type="PIR" id="S62697">
    <property type="entry name" value="S62697"/>
</dbReference>
<dbReference type="SMR" id="P55308"/>
<dbReference type="ExpressionAtlas" id="P55308">
    <property type="expression patterns" value="baseline and differential"/>
</dbReference>
<dbReference type="GO" id="GO:0009514">
    <property type="term" value="C:glyoxysome"/>
    <property type="evidence" value="ECO:0007669"/>
    <property type="project" value="UniProtKB-SubCell"/>
</dbReference>
<dbReference type="GO" id="GO:0005886">
    <property type="term" value="C:plasma membrane"/>
    <property type="evidence" value="ECO:0007669"/>
    <property type="project" value="TreeGrafter"/>
</dbReference>
<dbReference type="GO" id="GO:0004096">
    <property type="term" value="F:catalase activity"/>
    <property type="evidence" value="ECO:0007669"/>
    <property type="project" value="UniProtKB-EC"/>
</dbReference>
<dbReference type="GO" id="GO:0020037">
    <property type="term" value="F:heme binding"/>
    <property type="evidence" value="ECO:0007669"/>
    <property type="project" value="InterPro"/>
</dbReference>
<dbReference type="GO" id="GO:0046872">
    <property type="term" value="F:metal ion binding"/>
    <property type="evidence" value="ECO:0007669"/>
    <property type="project" value="UniProtKB-KW"/>
</dbReference>
<dbReference type="GO" id="GO:0042744">
    <property type="term" value="P:hydrogen peroxide catabolic process"/>
    <property type="evidence" value="ECO:0007669"/>
    <property type="project" value="UniProtKB-KW"/>
</dbReference>
<dbReference type="GO" id="GO:0009725">
    <property type="term" value="P:response to hormone"/>
    <property type="evidence" value="ECO:0007669"/>
    <property type="project" value="UniProtKB-ARBA"/>
</dbReference>
<dbReference type="GO" id="GO:0042542">
    <property type="term" value="P:response to hydrogen peroxide"/>
    <property type="evidence" value="ECO:0007669"/>
    <property type="project" value="TreeGrafter"/>
</dbReference>
<dbReference type="CDD" id="cd08154">
    <property type="entry name" value="catalase_clade_1"/>
    <property type="match status" value="1"/>
</dbReference>
<dbReference type="FunFam" id="2.40.180.10:FF:000002">
    <property type="entry name" value="Catalase"/>
    <property type="match status" value="1"/>
</dbReference>
<dbReference type="Gene3D" id="2.40.180.10">
    <property type="entry name" value="Catalase core domain"/>
    <property type="match status" value="1"/>
</dbReference>
<dbReference type="InterPro" id="IPR018028">
    <property type="entry name" value="Catalase"/>
</dbReference>
<dbReference type="InterPro" id="IPR024708">
    <property type="entry name" value="Catalase_AS"/>
</dbReference>
<dbReference type="InterPro" id="IPR024711">
    <property type="entry name" value="Catalase_clade1/3"/>
</dbReference>
<dbReference type="InterPro" id="IPR011614">
    <property type="entry name" value="Catalase_core"/>
</dbReference>
<dbReference type="InterPro" id="IPR002226">
    <property type="entry name" value="Catalase_haem_BS"/>
</dbReference>
<dbReference type="InterPro" id="IPR010582">
    <property type="entry name" value="Catalase_immune_responsive"/>
</dbReference>
<dbReference type="InterPro" id="IPR020835">
    <property type="entry name" value="Catalase_sf"/>
</dbReference>
<dbReference type="PANTHER" id="PTHR11465">
    <property type="entry name" value="CATALASE"/>
    <property type="match status" value="1"/>
</dbReference>
<dbReference type="PANTHER" id="PTHR11465:SF45">
    <property type="entry name" value="CATALASE ISOZYME A"/>
    <property type="match status" value="1"/>
</dbReference>
<dbReference type="Pfam" id="PF00199">
    <property type="entry name" value="Catalase"/>
    <property type="match status" value="1"/>
</dbReference>
<dbReference type="Pfam" id="PF06628">
    <property type="entry name" value="Catalase-rel"/>
    <property type="match status" value="1"/>
</dbReference>
<dbReference type="PIRSF" id="PIRSF038928">
    <property type="entry name" value="Catalase_clade1-3"/>
    <property type="match status" value="1"/>
</dbReference>
<dbReference type="PRINTS" id="PR00067">
    <property type="entry name" value="CATALASE"/>
</dbReference>
<dbReference type="SMART" id="SM01060">
    <property type="entry name" value="Catalase"/>
    <property type="match status" value="1"/>
</dbReference>
<dbReference type="SUPFAM" id="SSF56634">
    <property type="entry name" value="Heme-dependent catalase-like"/>
    <property type="match status" value="1"/>
</dbReference>
<dbReference type="PROSITE" id="PS00437">
    <property type="entry name" value="CATALASE_1"/>
    <property type="match status" value="1"/>
</dbReference>
<dbReference type="PROSITE" id="PS00438">
    <property type="entry name" value="CATALASE_2"/>
    <property type="match status" value="1"/>
</dbReference>
<dbReference type="PROSITE" id="PS51402">
    <property type="entry name" value="CATALASE_3"/>
    <property type="match status" value="1"/>
</dbReference>
<comment type="function">
    <text>Occurs in almost all aerobically respiring organisms and serves to protect cells from the toxic effects of hydrogen peroxide.</text>
</comment>
<comment type="catalytic activity">
    <reaction evidence="2">
        <text>2 H2O2 = O2 + 2 H2O</text>
        <dbReference type="Rhea" id="RHEA:20309"/>
        <dbReference type="ChEBI" id="CHEBI:15377"/>
        <dbReference type="ChEBI" id="CHEBI:15379"/>
        <dbReference type="ChEBI" id="CHEBI:16240"/>
        <dbReference type="EC" id="1.11.1.6"/>
    </reaction>
</comment>
<comment type="cofactor">
    <cofactor evidence="1">
        <name>heme</name>
        <dbReference type="ChEBI" id="CHEBI:30413"/>
    </cofactor>
</comment>
<comment type="subunit">
    <text evidence="1">Homotetramer.</text>
</comment>
<comment type="subcellular location">
    <subcellularLocation>
        <location evidence="1">Peroxisome</location>
    </subcellularLocation>
    <subcellularLocation>
        <location evidence="1">Glyoxysome</location>
    </subcellularLocation>
</comment>
<comment type="similarity">
    <text evidence="4">Belongs to the catalase family.</text>
</comment>
<evidence type="ECO:0000250" key="1"/>
<evidence type="ECO:0000255" key="2">
    <source>
        <dbReference type="PROSITE-ProRule" id="PRU10013"/>
    </source>
</evidence>
<evidence type="ECO:0000256" key="3">
    <source>
        <dbReference type="SAM" id="MobiDB-lite"/>
    </source>
</evidence>
<evidence type="ECO:0000305" key="4"/>
<proteinExistence type="evidence at transcript level"/>
<gene>
    <name type="primary">CAT2</name>
</gene>
<feature type="chain" id="PRO_0000084942" description="Catalase isozyme 2">
    <location>
        <begin position="1"/>
        <end position="494"/>
    </location>
</feature>
<feature type="region of interest" description="Disordered" evidence="3">
    <location>
        <begin position="1"/>
        <end position="29"/>
    </location>
</feature>
<feature type="compositionally biased region" description="Polar residues" evidence="3">
    <location>
        <begin position="8"/>
        <end position="22"/>
    </location>
</feature>
<feature type="active site" evidence="2">
    <location>
        <position position="65"/>
    </location>
</feature>
<feature type="active site" evidence="2">
    <location>
        <position position="138"/>
    </location>
</feature>
<feature type="binding site" description="axial binding residue" evidence="1">
    <location>
        <position position="348"/>
    </location>
    <ligand>
        <name>heme</name>
        <dbReference type="ChEBI" id="CHEBI:30413"/>
    </ligand>
    <ligandPart>
        <name>Fe</name>
        <dbReference type="ChEBI" id="CHEBI:18248"/>
    </ligandPart>
</feature>
<accession>P55308</accession>